<organism>
    <name type="scientific">Mus musculus</name>
    <name type="common">Mouse</name>
    <dbReference type="NCBI Taxonomy" id="10090"/>
    <lineage>
        <taxon>Eukaryota</taxon>
        <taxon>Metazoa</taxon>
        <taxon>Chordata</taxon>
        <taxon>Craniata</taxon>
        <taxon>Vertebrata</taxon>
        <taxon>Euteleostomi</taxon>
        <taxon>Mammalia</taxon>
        <taxon>Eutheria</taxon>
        <taxon>Euarchontoglires</taxon>
        <taxon>Glires</taxon>
        <taxon>Rodentia</taxon>
        <taxon>Myomorpha</taxon>
        <taxon>Muroidea</taxon>
        <taxon>Muridae</taxon>
        <taxon>Murinae</taxon>
        <taxon>Mus</taxon>
        <taxon>Mus</taxon>
    </lineage>
</organism>
<reference key="1">
    <citation type="journal article" date="2005" name="Science">
        <title>The transcriptional landscape of the mammalian genome.</title>
        <authorList>
            <person name="Carninci P."/>
            <person name="Kasukawa T."/>
            <person name="Katayama S."/>
            <person name="Gough J."/>
            <person name="Frith M.C."/>
            <person name="Maeda N."/>
            <person name="Oyama R."/>
            <person name="Ravasi T."/>
            <person name="Lenhard B."/>
            <person name="Wells C."/>
            <person name="Kodzius R."/>
            <person name="Shimokawa K."/>
            <person name="Bajic V.B."/>
            <person name="Brenner S.E."/>
            <person name="Batalov S."/>
            <person name="Forrest A.R."/>
            <person name="Zavolan M."/>
            <person name="Davis M.J."/>
            <person name="Wilming L.G."/>
            <person name="Aidinis V."/>
            <person name="Allen J.E."/>
            <person name="Ambesi-Impiombato A."/>
            <person name="Apweiler R."/>
            <person name="Aturaliya R.N."/>
            <person name="Bailey T.L."/>
            <person name="Bansal M."/>
            <person name="Baxter L."/>
            <person name="Beisel K.W."/>
            <person name="Bersano T."/>
            <person name="Bono H."/>
            <person name="Chalk A.M."/>
            <person name="Chiu K.P."/>
            <person name="Choudhary V."/>
            <person name="Christoffels A."/>
            <person name="Clutterbuck D.R."/>
            <person name="Crowe M.L."/>
            <person name="Dalla E."/>
            <person name="Dalrymple B.P."/>
            <person name="de Bono B."/>
            <person name="Della Gatta G."/>
            <person name="di Bernardo D."/>
            <person name="Down T."/>
            <person name="Engstrom P."/>
            <person name="Fagiolini M."/>
            <person name="Faulkner G."/>
            <person name="Fletcher C.F."/>
            <person name="Fukushima T."/>
            <person name="Furuno M."/>
            <person name="Futaki S."/>
            <person name="Gariboldi M."/>
            <person name="Georgii-Hemming P."/>
            <person name="Gingeras T.R."/>
            <person name="Gojobori T."/>
            <person name="Green R.E."/>
            <person name="Gustincich S."/>
            <person name="Harbers M."/>
            <person name="Hayashi Y."/>
            <person name="Hensch T.K."/>
            <person name="Hirokawa N."/>
            <person name="Hill D."/>
            <person name="Huminiecki L."/>
            <person name="Iacono M."/>
            <person name="Ikeo K."/>
            <person name="Iwama A."/>
            <person name="Ishikawa T."/>
            <person name="Jakt M."/>
            <person name="Kanapin A."/>
            <person name="Katoh M."/>
            <person name="Kawasawa Y."/>
            <person name="Kelso J."/>
            <person name="Kitamura H."/>
            <person name="Kitano H."/>
            <person name="Kollias G."/>
            <person name="Krishnan S.P."/>
            <person name="Kruger A."/>
            <person name="Kummerfeld S.K."/>
            <person name="Kurochkin I.V."/>
            <person name="Lareau L.F."/>
            <person name="Lazarevic D."/>
            <person name="Lipovich L."/>
            <person name="Liu J."/>
            <person name="Liuni S."/>
            <person name="McWilliam S."/>
            <person name="Madan Babu M."/>
            <person name="Madera M."/>
            <person name="Marchionni L."/>
            <person name="Matsuda H."/>
            <person name="Matsuzawa S."/>
            <person name="Miki H."/>
            <person name="Mignone F."/>
            <person name="Miyake S."/>
            <person name="Morris K."/>
            <person name="Mottagui-Tabar S."/>
            <person name="Mulder N."/>
            <person name="Nakano N."/>
            <person name="Nakauchi H."/>
            <person name="Ng P."/>
            <person name="Nilsson R."/>
            <person name="Nishiguchi S."/>
            <person name="Nishikawa S."/>
            <person name="Nori F."/>
            <person name="Ohara O."/>
            <person name="Okazaki Y."/>
            <person name="Orlando V."/>
            <person name="Pang K.C."/>
            <person name="Pavan W.J."/>
            <person name="Pavesi G."/>
            <person name="Pesole G."/>
            <person name="Petrovsky N."/>
            <person name="Piazza S."/>
            <person name="Reed J."/>
            <person name="Reid J.F."/>
            <person name="Ring B.Z."/>
            <person name="Ringwald M."/>
            <person name="Rost B."/>
            <person name="Ruan Y."/>
            <person name="Salzberg S.L."/>
            <person name="Sandelin A."/>
            <person name="Schneider C."/>
            <person name="Schoenbach C."/>
            <person name="Sekiguchi K."/>
            <person name="Semple C.A."/>
            <person name="Seno S."/>
            <person name="Sessa L."/>
            <person name="Sheng Y."/>
            <person name="Shibata Y."/>
            <person name="Shimada H."/>
            <person name="Shimada K."/>
            <person name="Silva D."/>
            <person name="Sinclair B."/>
            <person name="Sperling S."/>
            <person name="Stupka E."/>
            <person name="Sugiura K."/>
            <person name="Sultana R."/>
            <person name="Takenaka Y."/>
            <person name="Taki K."/>
            <person name="Tammoja K."/>
            <person name="Tan S.L."/>
            <person name="Tang S."/>
            <person name="Taylor M.S."/>
            <person name="Tegner J."/>
            <person name="Teichmann S.A."/>
            <person name="Ueda H.R."/>
            <person name="van Nimwegen E."/>
            <person name="Verardo R."/>
            <person name="Wei C.L."/>
            <person name="Yagi K."/>
            <person name="Yamanishi H."/>
            <person name="Zabarovsky E."/>
            <person name="Zhu S."/>
            <person name="Zimmer A."/>
            <person name="Hide W."/>
            <person name="Bult C."/>
            <person name="Grimmond S.M."/>
            <person name="Teasdale R.D."/>
            <person name="Liu E.T."/>
            <person name="Brusic V."/>
            <person name="Quackenbush J."/>
            <person name="Wahlestedt C."/>
            <person name="Mattick J.S."/>
            <person name="Hume D.A."/>
            <person name="Kai C."/>
            <person name="Sasaki D."/>
            <person name="Tomaru Y."/>
            <person name="Fukuda S."/>
            <person name="Kanamori-Katayama M."/>
            <person name="Suzuki M."/>
            <person name="Aoki J."/>
            <person name="Arakawa T."/>
            <person name="Iida J."/>
            <person name="Imamura K."/>
            <person name="Itoh M."/>
            <person name="Kato T."/>
            <person name="Kawaji H."/>
            <person name="Kawagashira N."/>
            <person name="Kawashima T."/>
            <person name="Kojima M."/>
            <person name="Kondo S."/>
            <person name="Konno H."/>
            <person name="Nakano K."/>
            <person name="Ninomiya N."/>
            <person name="Nishio T."/>
            <person name="Okada M."/>
            <person name="Plessy C."/>
            <person name="Shibata K."/>
            <person name="Shiraki T."/>
            <person name="Suzuki S."/>
            <person name="Tagami M."/>
            <person name="Waki K."/>
            <person name="Watahiki A."/>
            <person name="Okamura-Oho Y."/>
            <person name="Suzuki H."/>
            <person name="Kawai J."/>
            <person name="Hayashizaki Y."/>
        </authorList>
    </citation>
    <scope>NUCLEOTIDE SEQUENCE [LARGE SCALE MRNA]</scope>
    <source>
        <strain>C57BL/6J</strain>
        <tissue>Brain cortex</tissue>
    </source>
</reference>
<reference key="2">
    <citation type="journal article" date="2004" name="Genome Res.">
        <title>The status, quality, and expansion of the NIH full-length cDNA project: the Mammalian Gene Collection (MGC).</title>
        <authorList>
            <consortium name="The MGC Project Team"/>
        </authorList>
    </citation>
    <scope>NUCLEOTIDE SEQUENCE [LARGE SCALE MRNA]</scope>
    <source>
        <strain>FVB/N</strain>
        <tissue>Colon</tissue>
    </source>
</reference>
<reference key="3">
    <citation type="journal article" date="2002" name="Cell">
        <title>Identification of a signaling network in lateral nucleus of amygdala important for inhibiting memory specifically related to learned fear.</title>
        <authorList>
            <person name="Shumyatsky G.P."/>
            <person name="Tsvetkov E."/>
            <person name="Malleret G."/>
            <person name="Vronskaya S."/>
            <person name="Hatton M."/>
            <person name="Hampton L."/>
            <person name="Battey J.F."/>
            <person name="Dulac C."/>
            <person name="Kandel E.R."/>
            <person name="Bolshakov V.Y."/>
        </authorList>
    </citation>
    <scope>TISSUE SPECIFICITY</scope>
    <scope>FUNCTION IN CONTROL OF FEAR</scope>
</reference>
<reference key="4">
    <citation type="journal article" date="2002" name="J. Endocrinol.">
        <title>Disruptions in feeding and body weight control in gastrin-releasing peptide receptor deficient mice.</title>
        <authorList>
            <person name="Ladenheim E.E."/>
            <person name="Hampton L.L."/>
            <person name="Whitney A.C."/>
            <person name="White W.O."/>
            <person name="Battey J.F."/>
            <person name="Moran T.H."/>
        </authorList>
    </citation>
    <scope>FUNCTION</scope>
</reference>
<reference key="5">
    <citation type="journal article" date="2007" name="Nature">
        <title>A gastrin-releasing peptide receptor mediates the itch sensation in the spinal cord.</title>
        <authorList>
            <person name="Sun Y.G."/>
            <person name="Chen Z.F."/>
        </authorList>
    </citation>
    <scope>FUNCTION</scope>
    <scope>TISSUE SPECIFICITY</scope>
</reference>
<reference key="6">
    <citation type="journal article" date="2011" name="Peptides">
        <title>Gastrin-releasing peptide induces itch-related responses through mast cell degranulation in mice.</title>
        <authorList>
            <person name="Andoh T."/>
            <person name="Kuwazono T."/>
            <person name="Lee J.B."/>
            <person name="Kuraishi Y."/>
        </authorList>
    </citation>
    <scope>FUNCTION</scope>
</reference>
<reference key="7">
    <citation type="journal article" date="2015" name="J. Neurosci.">
        <title>GRPR/PI3Kgamma: partners in central transmission of itch.</title>
        <authorList>
            <person name="Pereira P.J."/>
            <person name="Machado G.D."/>
            <person name="Danesi G.M."/>
            <person name="Canevese F.F."/>
            <person name="Reddy V.B."/>
            <person name="Pereira T.C."/>
            <person name="Bogo M.R."/>
            <person name="Cheng Y.C."/>
            <person name="Laedermann C."/>
            <person name="Talbot S."/>
            <person name="Lerner E.A."/>
            <person name="Campos M.M."/>
        </authorList>
    </citation>
    <scope>FUNCTION</scope>
</reference>
<reference key="8">
    <citation type="journal article" date="2016" name="Nature">
        <title>The peptidergic control circuit for sighing.</title>
        <authorList>
            <person name="Li P."/>
            <person name="Janczewski W.A."/>
            <person name="Yackle K."/>
            <person name="Kam K."/>
            <person name="Pagliardini S."/>
            <person name="Krasnow M.A."/>
            <person name="Feldman J.L."/>
        </authorList>
    </citation>
    <scope>FUNCTION</scope>
    <scope>SUBCELLULAR LOCATION</scope>
    <scope>TISSUE SPECIFICITY</scope>
</reference>
<reference key="9">
    <citation type="journal article" date="2017" name="Science">
        <title>Molecular and neural basis of contagious itch behavior in mice.</title>
        <authorList>
            <person name="Yu Y.Q."/>
            <person name="Barry D.M."/>
            <person name="Hao Y."/>
            <person name="Liu X.T."/>
            <person name="Chen Z.F."/>
        </authorList>
    </citation>
    <scope>FUNCTION</scope>
    <scope>DISRUPTION PHENOTYPE</scope>
    <scope>TISSUE SPECIFICITY</scope>
</reference>
<reference key="10">
    <citation type="journal article" date="2021" name="Cell">
        <title>Bombesin-like peptide recruits disinhibitory cortical circuits and enhances fear memories.</title>
        <authorList>
            <person name="Melzer S."/>
            <person name="Newmark E.R."/>
            <person name="Mizuno G.O."/>
            <person name="Hyun M."/>
            <person name="Philson A.C."/>
            <person name="Quiroli E."/>
            <person name="Righetti B."/>
            <person name="Gregory M.R."/>
            <person name="Huang K.W."/>
            <person name="Levasseur J."/>
            <person name="Tian L."/>
            <person name="Sabatini B.L."/>
        </authorList>
    </citation>
    <scope>FUNCTION</scope>
    <scope>TISSUE SPECIFICITY</scope>
</reference>
<name>GRP_MOUSE</name>
<proteinExistence type="evidence at protein level"/>
<keyword id="KW-0027">Amidation</keyword>
<keyword id="KW-0966">Cell projection</keyword>
<keyword id="KW-0165">Cleavage on pair of basic residues</keyword>
<keyword id="KW-0968">Cytoplasmic vesicle</keyword>
<keyword id="KW-0467">Mast cell degranulation</keyword>
<keyword id="KW-1185">Reference proteome</keyword>
<keyword id="KW-0964">Secreted</keyword>
<keyword id="KW-0732">Signal</keyword>
<protein>
    <recommendedName>
        <fullName>Gastrin-releasing peptide</fullName>
        <shortName>GRP</shortName>
    </recommendedName>
    <component>
        <recommendedName>
            <fullName>Neuromedin-C</fullName>
        </recommendedName>
        <alternativeName>
            <fullName>GRP-10</fullName>
        </alternativeName>
        <alternativeName>
            <fullName evidence="15">GRP18-27</fullName>
        </alternativeName>
    </component>
</protein>
<comment type="function">
    <text evidence="3 4 7 8 9 11 12 13 14">Stimulates the release of gastrin and other gastrointestinal hormones (By similarity). Contributes to the perception of prurient stimuli and to the transmission of itch signals in the spinal cord that promote scratching behavior (PubMed:17653196, PubMed:26658875, PubMed:28280205). Contributes primarily to nonhistaminergic itch sensation (PubMed:28280205). In one study, shown to act in the amygdala as part of an inhibitory network which inhibits memory specifically related to learned fear (PubMed:12526815). In another study, shown to act on vasoactive intestinal peptide (VIP)-expressing cells in the auditory cortex, most likely via extrasynaptic diffusion from local and long-range sources, to mediate disinhibition of glutamatergic cells via VIP cell-specific GRPR signaling which leads to enhanced auditory fear memories (PubMed:34610277). Contributes to the regulation of food intake (PubMed:12176666). Inhibits voltage-gated sodium channels but enhances voltage-gated potassium channels in hippocampal neurons (By similarity). Contributes to the induction of sighing by acting directly on the pre-Botzinger complex, a cluster of several thousand neurons in the ventrolateral medulla responsible for inspiration during respiratory activity (PubMed:26855425).</text>
</comment>
<comment type="function">
    <molecule>Neuromedin-C</molecule>
    <text evidence="10">Induces an itch response through activation of receptors present on mast cells, triggering mast cell degranulation.</text>
</comment>
<comment type="subcellular location">
    <subcellularLocation>
        <location evidence="1">Secreted</location>
    </subcellularLocation>
    <subcellularLocation>
        <location evidence="5">Cytoplasmic vesicle</location>
        <location evidence="5">Secretory vesicle lumen</location>
    </subcellularLocation>
    <subcellularLocation>
        <location evidence="12">Cell projection</location>
        <location evidence="12">Neuron projection</location>
    </subcellularLocation>
    <text evidence="12">In neurons of the retrotrapezoid nucleus/parafacial respiratory group, expressed on neuron projections which project into the pre-Botzinger complex.</text>
</comment>
<comment type="tissue specificity">
    <text evidence="8 9 12 13 14">Detected in peptidergic dorsal root ganglion neurons (at protein level) (PubMed:17653196). Expressed in several dozen neurons throughout the dorsal retrotrapezoid nucleus/parafacial respiratory group (RTN/pFRG) as well as in scattered cells in the nucleus tractus solitarius and parabrachial nucleus (at protein level) (PubMed:26855425). Within the RTN/pFRG, expressed in neuronal subpopulations distinct from those expressing Nmb (at protein level) (PubMed:26855425). Expressed in L6 corticothalamic neurons (at protein level) (PubMed:34610277). Strongly expressed in several input areas of the auditory cortex including the lateral amygdala, contralateral auditory cortex, temporal association area, perirhinal cortex and auditory thalamic nuclei (at protein level) (PubMed:34610277). Detected in the suprachiasmatic nucleus in the hypothalamus (PubMed:28280205). Detected in a subset of glutamatergic cells in the cortex (PubMed:34610277). Highly expressed both in the lateral nucleus of the amygdala, and in regions sending synaptic projections to the lateral nucleus (PubMed:12526815).</text>
</comment>
<comment type="disruption phenotype">
    <text evidence="13">Contrary to wild-type, mutant mice do not display imitative scratching after observing spontaneous scratching behavior in another mouse (PubMed:28280205).</text>
</comment>
<comment type="similarity">
    <text evidence="16">Belongs to the bombesin/neuromedin-B/ranatensin family.</text>
</comment>
<evidence type="ECO:0000250" key="1">
    <source>
        <dbReference type="UniProtKB" id="P07492"/>
    </source>
</evidence>
<evidence type="ECO:0000250" key="2">
    <source>
        <dbReference type="UniProtKB" id="P08989"/>
    </source>
</evidence>
<evidence type="ECO:0000250" key="3">
    <source>
        <dbReference type="UniProtKB" id="P24393"/>
    </source>
</evidence>
<evidence type="ECO:0000250" key="4">
    <source>
        <dbReference type="UniProtKB" id="P63153"/>
    </source>
</evidence>
<evidence type="ECO:0000250" key="5">
    <source>
        <dbReference type="UniProtKB" id="Q863C3"/>
    </source>
</evidence>
<evidence type="ECO:0000256" key="6">
    <source>
        <dbReference type="SAM" id="MobiDB-lite"/>
    </source>
</evidence>
<evidence type="ECO:0000269" key="7">
    <source>
    </source>
</evidence>
<evidence type="ECO:0000269" key="8">
    <source>
    </source>
</evidence>
<evidence type="ECO:0000269" key="9">
    <source>
    </source>
</evidence>
<evidence type="ECO:0000269" key="10">
    <source>
    </source>
</evidence>
<evidence type="ECO:0000269" key="11">
    <source>
    </source>
</evidence>
<evidence type="ECO:0000269" key="12">
    <source>
    </source>
</evidence>
<evidence type="ECO:0000269" key="13">
    <source>
    </source>
</evidence>
<evidence type="ECO:0000269" key="14">
    <source>
    </source>
</evidence>
<evidence type="ECO:0000303" key="15">
    <source>
    </source>
</evidence>
<evidence type="ECO:0000305" key="16"/>
<feature type="signal peptide" evidence="2">
    <location>
        <begin position="1"/>
        <end position="23"/>
    </location>
</feature>
<feature type="peptide" id="PRO_0000262472" description="Gastrin-releasing peptide" evidence="2">
    <location>
        <begin position="24"/>
        <end position="52"/>
    </location>
</feature>
<feature type="peptide" id="PRO_0000262473" description="Neuromedin-C" evidence="5">
    <location>
        <begin position="43"/>
        <end position="52"/>
    </location>
</feature>
<feature type="propeptide" id="PRO_0000262474" evidence="2">
    <location>
        <begin position="56"/>
        <end position="146"/>
    </location>
</feature>
<feature type="region of interest" description="Disordered" evidence="6">
    <location>
        <begin position="94"/>
        <end position="121"/>
    </location>
</feature>
<feature type="compositionally biased region" description="Low complexity" evidence="6">
    <location>
        <begin position="94"/>
        <end position="112"/>
    </location>
</feature>
<feature type="modified residue" description="Methionine amide" evidence="4">
    <location>
        <position position="52"/>
    </location>
</feature>
<feature type="sequence conflict" description="In Ref. 1; BAE23968." evidence="16" ref="1">
    <original>L</original>
    <variation>Q</variation>
    <location>
        <position position="134"/>
    </location>
</feature>
<accession>Q8R1I2</accession>
<accession>Q3UTL2</accession>
<dbReference type="EMBL" id="AK133508">
    <property type="protein sequence ID" value="BAE21694.1"/>
    <property type="molecule type" value="mRNA"/>
</dbReference>
<dbReference type="EMBL" id="AK139345">
    <property type="protein sequence ID" value="BAE23968.1"/>
    <property type="molecule type" value="mRNA"/>
</dbReference>
<dbReference type="EMBL" id="BC024515">
    <property type="protein sequence ID" value="AAH24515.1"/>
    <property type="molecule type" value="mRNA"/>
</dbReference>
<dbReference type="CCDS" id="CCDS29310.1"/>
<dbReference type="RefSeq" id="NP_778177.1">
    <property type="nucleotide sequence ID" value="NM_175012.4"/>
</dbReference>
<dbReference type="RefSeq" id="XP_006525949.1">
    <property type="nucleotide sequence ID" value="XM_006525886.5"/>
</dbReference>
<dbReference type="SMR" id="Q8R1I2"/>
<dbReference type="FunCoup" id="Q8R1I2">
    <property type="interactions" value="411"/>
</dbReference>
<dbReference type="STRING" id="10090.ENSMUSP00000025395"/>
<dbReference type="PhosphoSitePlus" id="Q8R1I2"/>
<dbReference type="PaxDb" id="10090-ENSMUSP00000133437"/>
<dbReference type="ProteomicsDB" id="271338"/>
<dbReference type="Antibodypedia" id="1534">
    <property type="antibodies" value="312 antibodies from 30 providers"/>
</dbReference>
<dbReference type="DNASU" id="225642"/>
<dbReference type="Ensembl" id="ENSMUST00000025395.10">
    <property type="protein sequence ID" value="ENSMUSP00000025395.9"/>
    <property type="gene ID" value="ENSMUSG00000024517.18"/>
</dbReference>
<dbReference type="Ensembl" id="ENSMUST00000173985.10">
    <property type="protein sequence ID" value="ENSMUSP00000133437.2"/>
    <property type="gene ID" value="ENSMUSG00000024517.18"/>
</dbReference>
<dbReference type="GeneID" id="225642"/>
<dbReference type="KEGG" id="mmu:225642"/>
<dbReference type="UCSC" id="uc008ffk.2">
    <property type="organism name" value="mouse"/>
</dbReference>
<dbReference type="AGR" id="MGI:95833"/>
<dbReference type="CTD" id="2922"/>
<dbReference type="MGI" id="MGI:95833">
    <property type="gene designation" value="Grp"/>
</dbReference>
<dbReference type="VEuPathDB" id="HostDB:ENSMUSG00000024517"/>
<dbReference type="eggNOG" id="ENOG502S4DG">
    <property type="taxonomic scope" value="Eukaryota"/>
</dbReference>
<dbReference type="GeneTree" id="ENSGT00940000154470"/>
<dbReference type="InParanoid" id="Q8R1I2"/>
<dbReference type="OMA" id="KDMMDYL"/>
<dbReference type="OrthoDB" id="9879745at2759"/>
<dbReference type="PhylomeDB" id="Q8R1I2"/>
<dbReference type="TreeFam" id="TF336391"/>
<dbReference type="Reactome" id="R-MMU-375276">
    <property type="pathway name" value="Peptide ligand-binding receptors"/>
</dbReference>
<dbReference type="Reactome" id="R-MMU-381771">
    <property type="pathway name" value="Synthesis, secretion, and inactivation of Glucagon-like Peptide-1 (GLP-1)"/>
</dbReference>
<dbReference type="Reactome" id="R-MMU-416476">
    <property type="pathway name" value="G alpha (q) signalling events"/>
</dbReference>
<dbReference type="BioGRID-ORCS" id="225642">
    <property type="hits" value="1 hit in 77 CRISPR screens"/>
</dbReference>
<dbReference type="ChiTaRS" id="Grp">
    <property type="organism name" value="mouse"/>
</dbReference>
<dbReference type="PRO" id="PR:Q8R1I2"/>
<dbReference type="Proteomes" id="UP000000589">
    <property type="component" value="Chromosome 18"/>
</dbReference>
<dbReference type="RNAct" id="Q8R1I2">
    <property type="molecule type" value="protein"/>
</dbReference>
<dbReference type="Bgee" id="ENSMUSG00000024517">
    <property type="expression patterns" value="Expressed in subiculum and 106 other cell types or tissues"/>
</dbReference>
<dbReference type="GO" id="GO:0005615">
    <property type="term" value="C:extracellular space"/>
    <property type="evidence" value="ECO:0000250"/>
    <property type="project" value="UniProtKB"/>
</dbReference>
<dbReference type="GO" id="GO:0043005">
    <property type="term" value="C:neuron projection"/>
    <property type="evidence" value="ECO:0000314"/>
    <property type="project" value="UniProtKB"/>
</dbReference>
<dbReference type="GO" id="GO:0034774">
    <property type="term" value="C:secretory granule lumen"/>
    <property type="evidence" value="ECO:0000250"/>
    <property type="project" value="UniProtKB"/>
</dbReference>
<dbReference type="GO" id="GO:0005184">
    <property type="term" value="F:neuropeptide hormone activity"/>
    <property type="evidence" value="ECO:0000266"/>
    <property type="project" value="MGI"/>
</dbReference>
<dbReference type="GO" id="GO:0043303">
    <property type="term" value="P:mast cell degranulation"/>
    <property type="evidence" value="ECO:0000314"/>
    <property type="project" value="UniProtKB"/>
</dbReference>
<dbReference type="GO" id="GO:1903817">
    <property type="term" value="P:negative regulation of voltage-gated potassium channel activity"/>
    <property type="evidence" value="ECO:0000250"/>
    <property type="project" value="UniProtKB"/>
</dbReference>
<dbReference type="GO" id="GO:1905151">
    <property type="term" value="P:negative regulation of voltage-gated sodium channel activity"/>
    <property type="evidence" value="ECO:0000250"/>
    <property type="project" value="UniProtKB"/>
</dbReference>
<dbReference type="GO" id="GO:0007218">
    <property type="term" value="P:neuropeptide signaling pathway"/>
    <property type="evidence" value="ECO:0000266"/>
    <property type="project" value="MGI"/>
</dbReference>
<dbReference type="GO" id="GO:2000987">
    <property type="term" value="P:positive regulation of behavioral fear response"/>
    <property type="evidence" value="ECO:0000315"/>
    <property type="project" value="UniProtKB"/>
</dbReference>
<dbReference type="GO" id="GO:0090277">
    <property type="term" value="P:positive regulation of peptide hormone secretion"/>
    <property type="evidence" value="ECO:0000250"/>
    <property type="project" value="UniProtKB"/>
</dbReference>
<dbReference type="GO" id="GO:1900738">
    <property type="term" value="P:positive regulation of phospholipase C-activating G protein-coupled receptor signaling pathway"/>
    <property type="evidence" value="ECO:0000315"/>
    <property type="project" value="UniProtKB"/>
</dbReference>
<dbReference type="GO" id="GO:1903942">
    <property type="term" value="P:positive regulation of respiratory gaseous exchange"/>
    <property type="evidence" value="ECO:0000314"/>
    <property type="project" value="UniProtKB"/>
</dbReference>
<dbReference type="GO" id="GO:0036343">
    <property type="term" value="P:psychomotor behavior"/>
    <property type="evidence" value="ECO:0000315"/>
    <property type="project" value="UniProtKB"/>
</dbReference>
<dbReference type="GO" id="GO:0043207">
    <property type="term" value="P:response to external biotic stimulus"/>
    <property type="evidence" value="ECO:0000315"/>
    <property type="project" value="UniProtKB"/>
</dbReference>
<dbReference type="GO" id="GO:0035176">
    <property type="term" value="P:social behavior"/>
    <property type="evidence" value="ECO:0000315"/>
    <property type="project" value="UniProtKB"/>
</dbReference>
<dbReference type="InterPro" id="IPR000874">
    <property type="entry name" value="Bombesin"/>
</dbReference>
<dbReference type="PANTHER" id="PTHR16866">
    <property type="entry name" value="GASTRIN-RELEASING PEPTIDE"/>
    <property type="match status" value="1"/>
</dbReference>
<dbReference type="PANTHER" id="PTHR16866:SF2">
    <property type="entry name" value="GASTRIN-RELEASING PEPTIDE"/>
    <property type="match status" value="1"/>
</dbReference>
<dbReference type="Pfam" id="PF02044">
    <property type="entry name" value="Bombesin"/>
    <property type="match status" value="1"/>
</dbReference>
<dbReference type="PROSITE" id="PS00257">
    <property type="entry name" value="BOMBESIN"/>
    <property type="match status" value="1"/>
</dbReference>
<sequence length="146" mass="15659">MRGSELSLLLLALVLCQAPRGPAAPVSTGAGGGTVLAKMYPRGSHWAVGHLMGKKSTDESPSLYAADRDGLKEQLRGYVRWEEAARDLLDLLEAAGNQSHQPPQHPPLSLQPTWDPEDGSYFNDVQTAKLVDSLLQVLKEKGGTAS</sequence>
<gene>
    <name type="primary">Grp</name>
</gene>